<dbReference type="EMBL" id="Y11129">
    <property type="protein sequence ID" value="CAA72011.1"/>
    <property type="molecule type" value="mRNA"/>
</dbReference>
<dbReference type="RefSeq" id="NP_001075985.1">
    <property type="nucleotide sequence ID" value="NM_001082516.1"/>
</dbReference>
<dbReference type="SMR" id="Q9XSQ5"/>
<dbReference type="FunCoup" id="Q9XSQ5">
    <property type="interactions" value="384"/>
</dbReference>
<dbReference type="STRING" id="9796.ENSECAP00000010803"/>
<dbReference type="GlyCosmos" id="Q9XSQ5">
    <property type="glycosylation" value="3 sites, No reported glycans"/>
</dbReference>
<dbReference type="PaxDb" id="9796-ENSECAP00000010803"/>
<dbReference type="GeneID" id="100034222"/>
<dbReference type="KEGG" id="ecb:100034222"/>
<dbReference type="CTD" id="3593"/>
<dbReference type="InParanoid" id="Q9XSQ5"/>
<dbReference type="OrthoDB" id="8670716at2759"/>
<dbReference type="Proteomes" id="UP000002281">
    <property type="component" value="Unplaced"/>
</dbReference>
<dbReference type="GO" id="GO:0043514">
    <property type="term" value="C:interleukin-12 complex"/>
    <property type="evidence" value="ECO:0000318"/>
    <property type="project" value="GO_Central"/>
</dbReference>
<dbReference type="GO" id="GO:0016020">
    <property type="term" value="C:membrane"/>
    <property type="evidence" value="ECO:0007669"/>
    <property type="project" value="InterPro"/>
</dbReference>
<dbReference type="GO" id="GO:0005125">
    <property type="term" value="F:cytokine activity"/>
    <property type="evidence" value="ECO:0007669"/>
    <property type="project" value="UniProtKB-KW"/>
</dbReference>
<dbReference type="GO" id="GO:0004896">
    <property type="term" value="F:cytokine receptor activity"/>
    <property type="evidence" value="ECO:0007669"/>
    <property type="project" value="InterPro"/>
</dbReference>
<dbReference type="GO" id="GO:0042164">
    <property type="term" value="F:interleukin-12 alpha subunit binding"/>
    <property type="evidence" value="ECO:0000318"/>
    <property type="project" value="GO_Central"/>
</dbReference>
<dbReference type="GO" id="GO:0005143">
    <property type="term" value="F:interleukin-12 receptor binding"/>
    <property type="evidence" value="ECO:0000318"/>
    <property type="project" value="GO_Central"/>
</dbReference>
<dbReference type="GO" id="GO:0035722">
    <property type="term" value="P:interleukin-12-mediated signaling pathway"/>
    <property type="evidence" value="ECO:0000318"/>
    <property type="project" value="GO_Central"/>
</dbReference>
<dbReference type="CDD" id="cd00063">
    <property type="entry name" value="FN3"/>
    <property type="match status" value="1"/>
</dbReference>
<dbReference type="FunFam" id="2.60.40.10:FF:000959">
    <property type="entry name" value="Interleukin-12 subunit beta"/>
    <property type="match status" value="1"/>
</dbReference>
<dbReference type="FunFam" id="2.60.40.10:FF:001008">
    <property type="entry name" value="Interleukin-12 subunit beta"/>
    <property type="match status" value="1"/>
</dbReference>
<dbReference type="FunFam" id="2.60.40.10:FF:001009">
    <property type="entry name" value="Interleukin-12 subunit beta"/>
    <property type="match status" value="1"/>
</dbReference>
<dbReference type="Gene3D" id="2.60.40.10">
    <property type="entry name" value="Immunoglobulins"/>
    <property type="match status" value="3"/>
</dbReference>
<dbReference type="InterPro" id="IPR003961">
    <property type="entry name" value="FN3_dom"/>
</dbReference>
<dbReference type="InterPro" id="IPR036116">
    <property type="entry name" value="FN3_sf"/>
</dbReference>
<dbReference type="InterPro" id="IPR003530">
    <property type="entry name" value="Hematopoietin_rcpt_L_F3_CS"/>
</dbReference>
<dbReference type="InterPro" id="IPR007110">
    <property type="entry name" value="Ig-like_dom"/>
</dbReference>
<dbReference type="InterPro" id="IPR036179">
    <property type="entry name" value="Ig-like_dom_sf"/>
</dbReference>
<dbReference type="InterPro" id="IPR013783">
    <property type="entry name" value="Ig-like_fold"/>
</dbReference>
<dbReference type="InterPro" id="IPR003598">
    <property type="entry name" value="Ig_sub2"/>
</dbReference>
<dbReference type="InterPro" id="IPR050676">
    <property type="entry name" value="IL-12"/>
</dbReference>
<dbReference type="InterPro" id="IPR015528">
    <property type="entry name" value="IL-12_beta"/>
</dbReference>
<dbReference type="InterPro" id="IPR019482">
    <property type="entry name" value="IL-12_beta_cen-dom"/>
</dbReference>
<dbReference type="PANTHER" id="PTHR48485:SF4">
    <property type="entry name" value="INTERLEUKIN-12 SUBUNIT BETA"/>
    <property type="match status" value="1"/>
</dbReference>
<dbReference type="PANTHER" id="PTHR48485">
    <property type="entry name" value="INTERLEUKIN-12 SUBUNIT BETA-RELATED"/>
    <property type="match status" value="1"/>
</dbReference>
<dbReference type="Pfam" id="PF10420">
    <property type="entry name" value="IL12p40_C"/>
    <property type="match status" value="1"/>
</dbReference>
<dbReference type="PIRSF" id="PIRSF038007">
    <property type="entry name" value="IL_12_beta"/>
    <property type="match status" value="1"/>
</dbReference>
<dbReference type="PRINTS" id="PR01928">
    <property type="entry name" value="INTRLEUKN12B"/>
</dbReference>
<dbReference type="SMART" id="SM00408">
    <property type="entry name" value="IGc2"/>
    <property type="match status" value="1"/>
</dbReference>
<dbReference type="SUPFAM" id="SSF49265">
    <property type="entry name" value="Fibronectin type III"/>
    <property type="match status" value="2"/>
</dbReference>
<dbReference type="SUPFAM" id="SSF48726">
    <property type="entry name" value="Immunoglobulin"/>
    <property type="match status" value="1"/>
</dbReference>
<dbReference type="PROSITE" id="PS50853">
    <property type="entry name" value="FN3"/>
    <property type="match status" value="1"/>
</dbReference>
<dbReference type="PROSITE" id="PS01354">
    <property type="entry name" value="HEMATOPO_REC_L_F3"/>
    <property type="match status" value="1"/>
</dbReference>
<dbReference type="PROSITE" id="PS50835">
    <property type="entry name" value="IG_LIKE"/>
    <property type="match status" value="1"/>
</dbReference>
<organism>
    <name type="scientific">Equus caballus</name>
    <name type="common">Horse</name>
    <dbReference type="NCBI Taxonomy" id="9796"/>
    <lineage>
        <taxon>Eukaryota</taxon>
        <taxon>Metazoa</taxon>
        <taxon>Chordata</taxon>
        <taxon>Craniata</taxon>
        <taxon>Vertebrata</taxon>
        <taxon>Euteleostomi</taxon>
        <taxon>Mammalia</taxon>
        <taxon>Eutheria</taxon>
        <taxon>Laurasiatheria</taxon>
        <taxon>Perissodactyla</taxon>
        <taxon>Equidae</taxon>
        <taxon>Equus</taxon>
    </lineage>
</organism>
<protein>
    <recommendedName>
        <fullName>Interleukin-12 subunit beta</fullName>
        <shortName>IL-12B</shortName>
    </recommendedName>
    <alternativeName>
        <fullName>Cytotoxic lymphocyte maturation factor 40 kDa subunit</fullName>
        <shortName>CLMF p40</shortName>
    </alternativeName>
    <alternativeName>
        <fullName>IL-12 subunit p40</fullName>
    </alternativeName>
</protein>
<accession>Q9XSQ5</accession>
<proteinExistence type="evidence at transcript level"/>
<comment type="function">
    <text evidence="1">Cytokine that can act as a growth factor for activated T and NK cells, enhance the lytic activity of NK/lymphokine-activated killer cells, and stimulate the production of IFN-gamma by resting PBMC.</text>
</comment>
<comment type="function">
    <text evidence="1">Associates with IL23A to form the IL-23 interleukin, a heterodimeric cytokine which functions in innate and adaptive immunity. IL-23 may constitute with IL-17 an acute response to infection in peripheral tissues. IL-23 binds to a heterodimeric receptor complex composed of IL12RB1 and IL23R, activates the Jak-Stat signaling cascade, stimulates memory rather than naive T-cells and promotes production of pro-inflammatory cytokines. IL-23 induces autoimmune inflammation and thus may be responsible for autoimmune inflammatory diseases and may be important for tumorigenesis (By similarity).</text>
</comment>
<comment type="subunit">
    <text evidence="2 3">Heterodimer with IL12A; disulfide-linked. The heterodimer is known as interleukin IL-12. Heterodimer with IL23A; disulfide-linked. The heterodimer is known as interleukin IL-23. Also secreted as a monomer. Interacts with NBR1; this interaction promotes IL-12 secretion (By similarity).</text>
</comment>
<comment type="subcellular location">
    <subcellularLocation>
        <location>Secreted</location>
    </subcellularLocation>
</comment>
<comment type="similarity">
    <text evidence="7">Belongs to the IL-12B family.</text>
</comment>
<reference key="1">
    <citation type="journal article" date="1999" name="Immunogenetics">
        <title>Cloning and sequencing of horse interleukin-12 and interleukin-18 cDNAs.</title>
        <authorList>
            <person name="Nicolson L."/>
            <person name="Penha-Goncalves M.N."/>
            <person name="Keanie J.L."/>
            <person name="Logan N.A."/>
            <person name="Argyle D.J."/>
            <person name="Onions D.E."/>
        </authorList>
    </citation>
    <scope>NUCLEOTIDE SEQUENCE [MRNA]</scope>
</reference>
<feature type="signal peptide" evidence="1">
    <location>
        <begin position="1"/>
        <end position="22"/>
    </location>
</feature>
<feature type="chain" id="PRO_0000010929" description="Interleukin-12 subunit beta">
    <location>
        <begin position="23"/>
        <end position="329"/>
    </location>
</feature>
<feature type="domain" description="Ig-like C2-type">
    <location>
        <begin position="29"/>
        <end position="106"/>
    </location>
</feature>
<feature type="domain" description="Fibronectin type-III" evidence="6">
    <location>
        <begin position="238"/>
        <end position="329"/>
    </location>
</feature>
<feature type="glycosylation site" description="N-linked (GlcNAc...) asparagine" evidence="4">
    <location>
        <position position="125"/>
    </location>
</feature>
<feature type="glycosylation site" description="N-linked (GlcNAc...) asparagine" evidence="4">
    <location>
        <position position="135"/>
    </location>
</feature>
<feature type="glycosylation site" description="N-linked (GlcNAc...) asparagine" evidence="4">
    <location>
        <position position="223"/>
    </location>
</feature>
<feature type="disulfide bond" evidence="5">
    <location>
        <begin position="50"/>
        <end position="90"/>
    </location>
</feature>
<feature type="disulfide bond" description="Interchain (with C-99 in IL12A and C-76 in IL23A)" evidence="2 5">
    <location>
        <position position="200"/>
    </location>
</feature>
<name>IL12B_HORSE</name>
<gene>
    <name type="primary">IL12B</name>
</gene>
<evidence type="ECO:0000250" key="1"/>
<evidence type="ECO:0000250" key="2">
    <source>
        <dbReference type="UniProtKB" id="P29460"/>
    </source>
</evidence>
<evidence type="ECO:0000250" key="3">
    <source>
        <dbReference type="UniProtKB" id="P43432"/>
    </source>
</evidence>
<evidence type="ECO:0000255" key="4"/>
<evidence type="ECO:0000255" key="5">
    <source>
        <dbReference type="PROSITE-ProRule" id="PRU00114"/>
    </source>
</evidence>
<evidence type="ECO:0000255" key="6">
    <source>
        <dbReference type="PROSITE-ProRule" id="PRU00316"/>
    </source>
</evidence>
<evidence type="ECO:0000305" key="7"/>
<keyword id="KW-0202">Cytokine</keyword>
<keyword id="KW-1015">Disulfide bond</keyword>
<keyword id="KW-0325">Glycoprotein</keyword>
<keyword id="KW-0393">Immunoglobulin domain</keyword>
<keyword id="KW-1185">Reference proteome</keyword>
<keyword id="KW-0964">Secreted</keyword>
<keyword id="KW-0732">Signal</keyword>
<sequence length="329" mass="37442">MCHQWLVLSWFSLVLLASPLMAIWELEKDVYVVELDWYPDAPGEMVVLTCNTPEEEGITWTSAQSNEVLGSGKTLTIQVKEFGDAGWYTCHKGGEVLSHSHLLLHKKEDGIWSTDILKDQKESKNKTFLKCEAKNYSGRFTCWWLTAISTDLKFSVKSSRGSSDPRGVTCGAATLSAERVSVDDREYKKYTVECQEGSACPAAEESLPIEIVVDAVHKLKYENYTSGFFIRDIIKPDPPKNLQLKPLKNSRQVEVSWEYPETWSTPHSYFSLTFSIQVQGKNKKERKDRLFMDETSATVTCHKDGQIRVQARDRYYSSSWSEWASVSCS</sequence>